<protein>
    <recommendedName>
        <fullName evidence="3">Gem-associated protein 4b</fullName>
        <shortName evidence="2">Gemin4b</shortName>
    </recommendedName>
</protein>
<comment type="function">
    <text evidence="1">Component of the survival motor neuron (SMN) complex that catalyzes the assembly of small nuclear ribonucleoproteins (snRNPs), the building blocks of the spliceosome, and thereby plays an important role in the splicing of cellular pre-mRNAs (PubMed:30563832). One of 3 almost identical paralogs (Glos/Gem4a, Gem4b and Gem4c), resulting from a genomic triplication, that have some redundant function (PubMed:30563832). Required for neuromuscular function and organismal viability (PubMed:30563832).</text>
</comment>
<comment type="subunit">
    <text evidence="1">Component of the core survival motor neuron (SMN) complex composed of Smn, Gem2, Gem3, rig/Gem5 and one of 3 almost identical Gem4 paralogs encoded by Glos/Gem4a, Gem4b or Gem4c.</text>
</comment>
<comment type="disruption phenotype">
    <text evidence="1">RNAi-mediated knockdown targeting all 3 Gem4 paralogs (Glos/Gem4a, Gem4b and Gem4c) is larval lethal.</text>
</comment>
<keyword id="KW-1185">Reference proteome</keyword>
<name>GEM4B_DROME</name>
<proteinExistence type="evidence at protein level"/>
<gene>
    <name evidence="4" type="primary">Gem4b</name>
    <name evidence="4" type="ORF">CG32786</name>
</gene>
<evidence type="ECO:0000269" key="1">
    <source>
    </source>
</evidence>
<evidence type="ECO:0000303" key="2">
    <source>
    </source>
</evidence>
<evidence type="ECO:0000305" key="3"/>
<evidence type="ECO:0000312" key="4">
    <source>
        <dbReference type="FlyBase" id="FBgn0052786"/>
    </source>
</evidence>
<evidence type="ECO:0000312" key="5">
    <source>
        <dbReference type="Proteomes" id="UP000000803"/>
    </source>
</evidence>
<sequence length="911" mass="104994">MITAEKHPLDNCQLFVQLKKIFHDNNEQAKCLKDMIYWSGNDEHIEKICDQVTDLLEEHDLIIQPPDTMDPFAMNQLRGLLVYLVLNTAHDYFLCKSQWSANVMHLCNQLPPIPLFLTIAIAVNCCLMEPLEEFLACGPRWLTIQYFEAFNEALSVINSDCVETLPLLSAALRAAGRAIVNCNLPAENKQLLRQIACMEHRHILDSKQRLHTLPRPSTRKIYLAKAMDHLIEVLLYTLNDPLKREKPNCFAVYSQITEDISDSNSSDPMPDLRHFAQILLDVLQRIFQLVSVDTYMYWHEMKSKSALYNCQELICRQTAELLKVLQSDKLLGEHPVCKQMQSFADAAKTLEQRVAEMRMGELLVFLDSGMATDEELLAGLDNLFSRFIAFGNDECVETMANHLIMLTKKHAQIILSFLGQVVESEMVVEDEGISVTEVNQGDDEDETSSNDDYEELLSLVLRPLFMQLNVEDKMEVLLLRDEQNVTQGFNFKAPDHRERRIRFFNQLDYNKRFPITKFLVLCFENARQTWIDFSHLGVTHTRFSKLFWHIAQSCPKHAAFHISACADNILVNEQLLQKPYALQFTLYLYGHRQILNGLYTSARQLCVSLKDGRCPYGEDELRQAQNRFLDACAYGLAKFIEPMNLPSLQLILKLLKQISLGESNLITRGTAELNALEKEHPKLENGDDAPAVKVAKHYTYLNASLPEWRLKHWKLISHVMKTIDALRWDLATFEDFRVDNLELAVWYWQDGLSHLTFLGTECRQRILNQVNSLKHKGFWLIYLKEDTLKDTRSFLKLLTQSSAQEANDLFNKLLKKRADCAVMGDLSDAVVKVNSESAFMAFRFLFREYLIAFRSHAKHNKTITKRQHWDHLMAVVAKAPFSIRNEIMKLASKAFAVRFGINIQEQQAAKC</sequence>
<organism evidence="5">
    <name type="scientific">Drosophila melanogaster</name>
    <name type="common">Fruit fly</name>
    <dbReference type="NCBI Taxonomy" id="7227"/>
    <lineage>
        <taxon>Eukaryota</taxon>
        <taxon>Metazoa</taxon>
        <taxon>Ecdysozoa</taxon>
        <taxon>Arthropoda</taxon>
        <taxon>Hexapoda</taxon>
        <taxon>Insecta</taxon>
        <taxon>Pterygota</taxon>
        <taxon>Neoptera</taxon>
        <taxon>Endopterygota</taxon>
        <taxon>Diptera</taxon>
        <taxon>Brachycera</taxon>
        <taxon>Muscomorpha</taxon>
        <taxon>Ephydroidea</taxon>
        <taxon>Drosophilidae</taxon>
        <taxon>Drosophila</taxon>
        <taxon>Sophophora</taxon>
    </lineage>
</organism>
<reference evidence="5" key="1">
    <citation type="journal article" date="2000" name="Science">
        <title>The genome sequence of Drosophila melanogaster.</title>
        <authorList>
            <person name="Adams M.D."/>
            <person name="Celniker S.E."/>
            <person name="Holt R.A."/>
            <person name="Evans C.A."/>
            <person name="Gocayne J.D."/>
            <person name="Amanatides P.G."/>
            <person name="Scherer S.E."/>
            <person name="Li P.W."/>
            <person name="Hoskins R.A."/>
            <person name="Galle R.F."/>
            <person name="George R.A."/>
            <person name="Lewis S.E."/>
            <person name="Richards S."/>
            <person name="Ashburner M."/>
            <person name="Henderson S.N."/>
            <person name="Sutton G.G."/>
            <person name="Wortman J.R."/>
            <person name="Yandell M.D."/>
            <person name="Zhang Q."/>
            <person name="Chen L.X."/>
            <person name="Brandon R.C."/>
            <person name="Rogers Y.-H.C."/>
            <person name="Blazej R.G."/>
            <person name="Champe M."/>
            <person name="Pfeiffer B.D."/>
            <person name="Wan K.H."/>
            <person name="Doyle C."/>
            <person name="Baxter E.G."/>
            <person name="Helt G."/>
            <person name="Nelson C.R."/>
            <person name="Miklos G.L.G."/>
            <person name="Abril J.F."/>
            <person name="Agbayani A."/>
            <person name="An H.-J."/>
            <person name="Andrews-Pfannkoch C."/>
            <person name="Baldwin D."/>
            <person name="Ballew R.M."/>
            <person name="Basu A."/>
            <person name="Baxendale J."/>
            <person name="Bayraktaroglu L."/>
            <person name="Beasley E.M."/>
            <person name="Beeson K.Y."/>
            <person name="Benos P.V."/>
            <person name="Berman B.P."/>
            <person name="Bhandari D."/>
            <person name="Bolshakov S."/>
            <person name="Borkova D."/>
            <person name="Botchan M.R."/>
            <person name="Bouck J."/>
            <person name="Brokstein P."/>
            <person name="Brottier P."/>
            <person name="Burtis K.C."/>
            <person name="Busam D.A."/>
            <person name="Butler H."/>
            <person name="Cadieu E."/>
            <person name="Center A."/>
            <person name="Chandra I."/>
            <person name="Cherry J.M."/>
            <person name="Cawley S."/>
            <person name="Dahlke C."/>
            <person name="Davenport L.B."/>
            <person name="Davies P."/>
            <person name="de Pablos B."/>
            <person name="Delcher A."/>
            <person name="Deng Z."/>
            <person name="Mays A.D."/>
            <person name="Dew I."/>
            <person name="Dietz S.M."/>
            <person name="Dodson K."/>
            <person name="Doup L.E."/>
            <person name="Downes M."/>
            <person name="Dugan-Rocha S."/>
            <person name="Dunkov B.C."/>
            <person name="Dunn P."/>
            <person name="Durbin K.J."/>
            <person name="Evangelista C.C."/>
            <person name="Ferraz C."/>
            <person name="Ferriera S."/>
            <person name="Fleischmann W."/>
            <person name="Fosler C."/>
            <person name="Gabrielian A.E."/>
            <person name="Garg N.S."/>
            <person name="Gelbart W.M."/>
            <person name="Glasser K."/>
            <person name="Glodek A."/>
            <person name="Gong F."/>
            <person name="Gorrell J.H."/>
            <person name="Gu Z."/>
            <person name="Guan P."/>
            <person name="Harris M."/>
            <person name="Harris N.L."/>
            <person name="Harvey D.A."/>
            <person name="Heiman T.J."/>
            <person name="Hernandez J.R."/>
            <person name="Houck J."/>
            <person name="Hostin D."/>
            <person name="Houston K.A."/>
            <person name="Howland T.J."/>
            <person name="Wei M.-H."/>
            <person name="Ibegwam C."/>
            <person name="Jalali M."/>
            <person name="Kalush F."/>
            <person name="Karpen G.H."/>
            <person name="Ke Z."/>
            <person name="Kennison J.A."/>
            <person name="Ketchum K.A."/>
            <person name="Kimmel B.E."/>
            <person name="Kodira C.D."/>
            <person name="Kraft C.L."/>
            <person name="Kravitz S."/>
            <person name="Kulp D."/>
            <person name="Lai Z."/>
            <person name="Lasko P."/>
            <person name="Lei Y."/>
            <person name="Levitsky A.A."/>
            <person name="Li J.H."/>
            <person name="Li Z."/>
            <person name="Liang Y."/>
            <person name="Lin X."/>
            <person name="Liu X."/>
            <person name="Mattei B."/>
            <person name="McIntosh T.C."/>
            <person name="McLeod M.P."/>
            <person name="McPherson D."/>
            <person name="Merkulov G."/>
            <person name="Milshina N.V."/>
            <person name="Mobarry C."/>
            <person name="Morris J."/>
            <person name="Moshrefi A."/>
            <person name="Mount S.M."/>
            <person name="Moy M."/>
            <person name="Murphy B."/>
            <person name="Murphy L."/>
            <person name="Muzny D.M."/>
            <person name="Nelson D.L."/>
            <person name="Nelson D.R."/>
            <person name="Nelson K.A."/>
            <person name="Nixon K."/>
            <person name="Nusskern D.R."/>
            <person name="Pacleb J.M."/>
            <person name="Palazzolo M."/>
            <person name="Pittman G.S."/>
            <person name="Pan S."/>
            <person name="Pollard J."/>
            <person name="Puri V."/>
            <person name="Reese M.G."/>
            <person name="Reinert K."/>
            <person name="Remington K."/>
            <person name="Saunders R.D.C."/>
            <person name="Scheeler F."/>
            <person name="Shen H."/>
            <person name="Shue B.C."/>
            <person name="Siden-Kiamos I."/>
            <person name="Simpson M."/>
            <person name="Skupski M.P."/>
            <person name="Smith T.J."/>
            <person name="Spier E."/>
            <person name="Spradling A.C."/>
            <person name="Stapleton M."/>
            <person name="Strong R."/>
            <person name="Sun E."/>
            <person name="Svirskas R."/>
            <person name="Tector C."/>
            <person name="Turner R."/>
            <person name="Venter E."/>
            <person name="Wang A.H."/>
            <person name="Wang X."/>
            <person name="Wang Z.-Y."/>
            <person name="Wassarman D.A."/>
            <person name="Weinstock G.M."/>
            <person name="Weissenbach J."/>
            <person name="Williams S.M."/>
            <person name="Woodage T."/>
            <person name="Worley K.C."/>
            <person name="Wu D."/>
            <person name="Yang S."/>
            <person name="Yao Q.A."/>
            <person name="Ye J."/>
            <person name="Yeh R.-F."/>
            <person name="Zaveri J.S."/>
            <person name="Zhan M."/>
            <person name="Zhang G."/>
            <person name="Zhao Q."/>
            <person name="Zheng L."/>
            <person name="Zheng X.H."/>
            <person name="Zhong F.N."/>
            <person name="Zhong W."/>
            <person name="Zhou X."/>
            <person name="Zhu S.C."/>
            <person name="Zhu X."/>
            <person name="Smith H.O."/>
            <person name="Gibbs R.A."/>
            <person name="Myers E.W."/>
            <person name="Rubin G.M."/>
            <person name="Venter J.C."/>
        </authorList>
    </citation>
    <scope>NUCLEOTIDE SEQUENCE [LARGE SCALE GENOMIC DNA]</scope>
    <source>
        <strain evidence="5">Berkeley</strain>
    </source>
</reference>
<reference evidence="5" key="2">
    <citation type="journal article" date="2002" name="Genome Biol.">
        <title>Annotation of the Drosophila melanogaster euchromatic genome: a systematic review.</title>
        <authorList>
            <person name="Misra S."/>
            <person name="Crosby M.A."/>
            <person name="Mungall C.J."/>
            <person name="Matthews B.B."/>
            <person name="Campbell K.S."/>
            <person name="Hradecky P."/>
            <person name="Huang Y."/>
            <person name="Kaminker J.S."/>
            <person name="Millburn G.H."/>
            <person name="Prochnik S.E."/>
            <person name="Smith C.D."/>
            <person name="Tupy J.L."/>
            <person name="Whitfield E.J."/>
            <person name="Bayraktaroglu L."/>
            <person name="Berman B.P."/>
            <person name="Bettencourt B.R."/>
            <person name="Celniker S.E."/>
            <person name="de Grey A.D.N.J."/>
            <person name="Drysdale R.A."/>
            <person name="Harris N.L."/>
            <person name="Richter J."/>
            <person name="Russo S."/>
            <person name="Schroeder A.J."/>
            <person name="Shu S.Q."/>
            <person name="Stapleton M."/>
            <person name="Yamada C."/>
            <person name="Ashburner M."/>
            <person name="Gelbart W.M."/>
            <person name="Rubin G.M."/>
            <person name="Lewis S.E."/>
        </authorList>
    </citation>
    <scope>GENOME REANNOTATION</scope>
    <source>
        <strain evidence="5">Berkeley</strain>
    </source>
</reference>
<reference key="3">
    <citation type="journal article" date="2019" name="G3 (Bethesda)">
        <title>Composition of the Survival Motor Neuron (SMN) Complex in Drosophila melanogaster.</title>
        <authorList>
            <person name="Matera A.G."/>
            <person name="Raimer A.C."/>
            <person name="Schmidt C.A."/>
            <person name="Kelly J.A."/>
            <person name="Droby G.N."/>
            <person name="Baillat D."/>
            <person name="Ten Have S."/>
            <person name="Lamond A.I."/>
            <person name="Wagner E.J."/>
            <person name="Gray K.M."/>
        </authorList>
    </citation>
    <scope>FUNCTION</scope>
    <scope>IDENTIFICATION IN THE SMN COMPLEX</scope>
    <scope>DISRUPTION PHENOTYPE</scope>
    <scope>IDENTIFICATION BY MASS SPECTROMETRY</scope>
    <scope>NOMENCLATURE</scope>
</reference>
<accession>Q8IRT0</accession>
<dbReference type="EMBL" id="AE014298">
    <property type="protein sequence ID" value="AAN09113.2"/>
    <property type="molecule type" value="Genomic_DNA"/>
</dbReference>
<dbReference type="RefSeq" id="NP_726900.2">
    <property type="nucleotide sequence ID" value="NM_166997.2"/>
</dbReference>
<dbReference type="ComplexPortal" id="CPX-8066">
    <property type="entry name" value="Survival motor neuron complex, Gem4B variant"/>
</dbReference>
<dbReference type="FunCoup" id="Q8IRT0">
    <property type="interactions" value="2"/>
</dbReference>
<dbReference type="STRING" id="7227.FBpp0311141"/>
<dbReference type="PaxDb" id="7227-FBpp0070587"/>
<dbReference type="EnsemblMetazoa" id="FBtr0344825">
    <property type="protein sequence ID" value="FBpp0311141"/>
    <property type="gene ID" value="FBgn0052786"/>
</dbReference>
<dbReference type="GeneID" id="318210"/>
<dbReference type="KEGG" id="dme:Dmel_CG32786"/>
<dbReference type="UCSC" id="CG32786-RA">
    <property type="organism name" value="d. melanogaster"/>
</dbReference>
<dbReference type="AGR" id="FB:FBgn0052786"/>
<dbReference type="CTD" id="318210"/>
<dbReference type="FlyBase" id="FBgn0052786">
    <property type="gene designation" value="Gem4b"/>
</dbReference>
<dbReference type="VEuPathDB" id="VectorBase:FBgn0052786"/>
<dbReference type="eggNOG" id="ENOG502SDT1">
    <property type="taxonomic scope" value="Eukaryota"/>
</dbReference>
<dbReference type="GeneTree" id="ENSGT00790000123991"/>
<dbReference type="HOGENOM" id="CLU_014736_0_0_1"/>
<dbReference type="InParanoid" id="Q8IRT0"/>
<dbReference type="OMA" id="HALMICE"/>
<dbReference type="OrthoDB" id="6588253at2759"/>
<dbReference type="PhylomeDB" id="Q8IRT0"/>
<dbReference type="GenomeRNAi" id="318210"/>
<dbReference type="Proteomes" id="UP000000803">
    <property type="component" value="Chromosome X"/>
</dbReference>
<dbReference type="Bgee" id="FBgn0052786">
    <property type="expression patterns" value="Expressed in early-mid elongation-stage spermatid (Drosophila) in testis and 8 other cell types or tissues"/>
</dbReference>
<dbReference type="GO" id="GO:0032797">
    <property type="term" value="C:SMN complex"/>
    <property type="evidence" value="ECO:0000314"/>
    <property type="project" value="FlyBase"/>
</dbReference>
<feature type="chain" id="PRO_0000460835" description="Gem-associated protein 4b">
    <location>
        <begin position="1"/>
        <end position="911"/>
    </location>
</feature>